<evidence type="ECO:0000255" key="1">
    <source>
        <dbReference type="HAMAP-Rule" id="MF_00038"/>
    </source>
</evidence>
<proteinExistence type="inferred from homology"/>
<organism>
    <name type="scientific">Nitrosomonas eutropha (strain DSM 101675 / C91 / Nm57)</name>
    <dbReference type="NCBI Taxonomy" id="335283"/>
    <lineage>
        <taxon>Bacteria</taxon>
        <taxon>Pseudomonadati</taxon>
        <taxon>Pseudomonadota</taxon>
        <taxon>Betaproteobacteria</taxon>
        <taxon>Nitrosomonadales</taxon>
        <taxon>Nitrosomonadaceae</taxon>
        <taxon>Nitrosomonas</taxon>
    </lineage>
</organism>
<sequence length="361" mass="39207">MLLALFQWIAEDIRAFNVFSYITLRTMLAALTALSISFLIGPAMIRSLTTRKVGQSVRSDGPQSHLTKAGTPTMGGALILMAVIITTLLWADLSNRYIWLVLLTTLGFGAIGWVDDYRKVVQHNSKGLPASAKFFWQSIIALLVAVYLAMTAELPQHTDMIVPFFKEVAIPLGSFLFIILTYLVIVGSSNAVNLTDGLDGLAIMPTVMISGALAIFAYVAGHAIFAKYLGIPHIPSAGELAVFCGALAGAGLAFLWFNANPAEVFMGDVGALALGAALGVITVIVRQEIVLVIMGGVFVMEALSVMIQVASFKLFGRRVFRMAPLHHHYELKGWKENQVVVRFWIITIILVLIGLSTLKLR</sequence>
<accession>Q0AJD8</accession>
<reference key="1">
    <citation type="journal article" date="2007" name="Environ. Microbiol.">
        <title>Whole-genome analysis of the ammonia-oxidizing bacterium, Nitrosomonas eutropha C91: implications for niche adaptation.</title>
        <authorList>
            <person name="Stein L.Y."/>
            <person name="Arp D.J."/>
            <person name="Berube P.M."/>
            <person name="Chain P.S."/>
            <person name="Hauser L."/>
            <person name="Jetten M.S."/>
            <person name="Klotz M.G."/>
            <person name="Larimer F.W."/>
            <person name="Norton J.M."/>
            <person name="Op den Camp H.J.M."/>
            <person name="Shin M."/>
            <person name="Wei X."/>
        </authorList>
    </citation>
    <scope>NUCLEOTIDE SEQUENCE [LARGE SCALE GENOMIC DNA]</scope>
    <source>
        <strain>DSM 101675 / C91 / Nm57</strain>
    </source>
</reference>
<gene>
    <name evidence="1" type="primary">mraY</name>
    <name type="ordered locus">Neut_0249</name>
</gene>
<protein>
    <recommendedName>
        <fullName evidence="1">Phospho-N-acetylmuramoyl-pentapeptide-transferase</fullName>
        <ecNumber evidence="1">2.7.8.13</ecNumber>
    </recommendedName>
    <alternativeName>
        <fullName evidence="1">UDP-MurNAc-pentapeptide phosphotransferase</fullName>
    </alternativeName>
</protein>
<keyword id="KW-0131">Cell cycle</keyword>
<keyword id="KW-0132">Cell division</keyword>
<keyword id="KW-0997">Cell inner membrane</keyword>
<keyword id="KW-1003">Cell membrane</keyword>
<keyword id="KW-0133">Cell shape</keyword>
<keyword id="KW-0961">Cell wall biogenesis/degradation</keyword>
<keyword id="KW-0460">Magnesium</keyword>
<keyword id="KW-0472">Membrane</keyword>
<keyword id="KW-0479">Metal-binding</keyword>
<keyword id="KW-0573">Peptidoglycan synthesis</keyword>
<keyword id="KW-0808">Transferase</keyword>
<keyword id="KW-0812">Transmembrane</keyword>
<keyword id="KW-1133">Transmembrane helix</keyword>
<name>MRAY_NITEC</name>
<comment type="function">
    <text evidence="1">Catalyzes the initial step of the lipid cycle reactions in the biosynthesis of the cell wall peptidoglycan: transfers peptidoglycan precursor phospho-MurNAc-pentapeptide from UDP-MurNAc-pentapeptide onto the lipid carrier undecaprenyl phosphate, yielding undecaprenyl-pyrophosphoryl-MurNAc-pentapeptide, known as lipid I.</text>
</comment>
<comment type="catalytic activity">
    <reaction evidence="1">
        <text>UDP-N-acetyl-alpha-D-muramoyl-L-alanyl-gamma-D-glutamyl-meso-2,6-diaminopimeloyl-D-alanyl-D-alanine + di-trans,octa-cis-undecaprenyl phosphate = di-trans,octa-cis-undecaprenyl diphospho-N-acetyl-alpha-D-muramoyl-L-alanyl-D-glutamyl-meso-2,6-diaminopimeloyl-D-alanyl-D-alanine + UMP</text>
        <dbReference type="Rhea" id="RHEA:28386"/>
        <dbReference type="ChEBI" id="CHEBI:57865"/>
        <dbReference type="ChEBI" id="CHEBI:60392"/>
        <dbReference type="ChEBI" id="CHEBI:61386"/>
        <dbReference type="ChEBI" id="CHEBI:61387"/>
        <dbReference type="EC" id="2.7.8.13"/>
    </reaction>
</comment>
<comment type="cofactor">
    <cofactor evidence="1">
        <name>Mg(2+)</name>
        <dbReference type="ChEBI" id="CHEBI:18420"/>
    </cofactor>
</comment>
<comment type="pathway">
    <text evidence="1">Cell wall biogenesis; peptidoglycan biosynthesis.</text>
</comment>
<comment type="subcellular location">
    <subcellularLocation>
        <location evidence="1">Cell inner membrane</location>
        <topology evidence="1">Multi-pass membrane protein</topology>
    </subcellularLocation>
</comment>
<comment type="similarity">
    <text evidence="1">Belongs to the glycosyltransferase 4 family. MraY subfamily.</text>
</comment>
<dbReference type="EC" id="2.7.8.13" evidence="1"/>
<dbReference type="EMBL" id="CP000450">
    <property type="protein sequence ID" value="ABI58533.1"/>
    <property type="molecule type" value="Genomic_DNA"/>
</dbReference>
<dbReference type="RefSeq" id="WP_011633377.1">
    <property type="nucleotide sequence ID" value="NC_008344.1"/>
</dbReference>
<dbReference type="SMR" id="Q0AJD8"/>
<dbReference type="STRING" id="335283.Neut_0249"/>
<dbReference type="KEGG" id="net:Neut_0249"/>
<dbReference type="eggNOG" id="COG0472">
    <property type="taxonomic scope" value="Bacteria"/>
</dbReference>
<dbReference type="HOGENOM" id="CLU_023982_0_0_4"/>
<dbReference type="OrthoDB" id="9805475at2"/>
<dbReference type="UniPathway" id="UPA00219"/>
<dbReference type="Proteomes" id="UP000001966">
    <property type="component" value="Chromosome"/>
</dbReference>
<dbReference type="GO" id="GO:0005886">
    <property type="term" value="C:plasma membrane"/>
    <property type="evidence" value="ECO:0007669"/>
    <property type="project" value="UniProtKB-SubCell"/>
</dbReference>
<dbReference type="GO" id="GO:0046872">
    <property type="term" value="F:metal ion binding"/>
    <property type="evidence" value="ECO:0007669"/>
    <property type="project" value="UniProtKB-KW"/>
</dbReference>
<dbReference type="GO" id="GO:0008963">
    <property type="term" value="F:phospho-N-acetylmuramoyl-pentapeptide-transferase activity"/>
    <property type="evidence" value="ECO:0007669"/>
    <property type="project" value="UniProtKB-UniRule"/>
</dbReference>
<dbReference type="GO" id="GO:0051992">
    <property type="term" value="F:UDP-N-acetylmuramoyl-L-alanyl-D-glutamyl-meso-2,6-diaminopimelyl-D-alanyl-D-alanine:undecaprenyl-phosphate transferase activity"/>
    <property type="evidence" value="ECO:0007669"/>
    <property type="project" value="RHEA"/>
</dbReference>
<dbReference type="GO" id="GO:0051301">
    <property type="term" value="P:cell division"/>
    <property type="evidence" value="ECO:0007669"/>
    <property type="project" value="UniProtKB-KW"/>
</dbReference>
<dbReference type="GO" id="GO:0071555">
    <property type="term" value="P:cell wall organization"/>
    <property type="evidence" value="ECO:0007669"/>
    <property type="project" value="UniProtKB-KW"/>
</dbReference>
<dbReference type="GO" id="GO:0009252">
    <property type="term" value="P:peptidoglycan biosynthetic process"/>
    <property type="evidence" value="ECO:0007669"/>
    <property type="project" value="UniProtKB-UniRule"/>
</dbReference>
<dbReference type="GO" id="GO:0008360">
    <property type="term" value="P:regulation of cell shape"/>
    <property type="evidence" value="ECO:0007669"/>
    <property type="project" value="UniProtKB-KW"/>
</dbReference>
<dbReference type="CDD" id="cd06852">
    <property type="entry name" value="GT_MraY"/>
    <property type="match status" value="1"/>
</dbReference>
<dbReference type="HAMAP" id="MF_00038">
    <property type="entry name" value="MraY"/>
    <property type="match status" value="1"/>
</dbReference>
<dbReference type="InterPro" id="IPR000715">
    <property type="entry name" value="Glycosyl_transferase_4"/>
</dbReference>
<dbReference type="InterPro" id="IPR003524">
    <property type="entry name" value="PNAcMuramoyl-5peptid_Trfase"/>
</dbReference>
<dbReference type="InterPro" id="IPR018480">
    <property type="entry name" value="PNAcMuramoyl-5peptid_Trfase_CS"/>
</dbReference>
<dbReference type="NCBIfam" id="TIGR00445">
    <property type="entry name" value="mraY"/>
    <property type="match status" value="1"/>
</dbReference>
<dbReference type="PANTHER" id="PTHR22926">
    <property type="entry name" value="PHOSPHO-N-ACETYLMURAMOYL-PENTAPEPTIDE-TRANSFERASE"/>
    <property type="match status" value="1"/>
</dbReference>
<dbReference type="PANTHER" id="PTHR22926:SF5">
    <property type="entry name" value="PHOSPHO-N-ACETYLMURAMOYL-PENTAPEPTIDE-TRANSFERASE HOMOLOG"/>
    <property type="match status" value="1"/>
</dbReference>
<dbReference type="Pfam" id="PF00953">
    <property type="entry name" value="Glycos_transf_4"/>
    <property type="match status" value="1"/>
</dbReference>
<dbReference type="Pfam" id="PF10555">
    <property type="entry name" value="MraY_sig1"/>
    <property type="match status" value="1"/>
</dbReference>
<dbReference type="PROSITE" id="PS01347">
    <property type="entry name" value="MRAY_1"/>
    <property type="match status" value="1"/>
</dbReference>
<dbReference type="PROSITE" id="PS01348">
    <property type="entry name" value="MRAY_2"/>
    <property type="match status" value="1"/>
</dbReference>
<feature type="chain" id="PRO_1000003020" description="Phospho-N-acetylmuramoyl-pentapeptide-transferase">
    <location>
        <begin position="1"/>
        <end position="361"/>
    </location>
</feature>
<feature type="transmembrane region" description="Helical" evidence="1">
    <location>
        <begin position="28"/>
        <end position="48"/>
    </location>
</feature>
<feature type="transmembrane region" description="Helical" evidence="1">
    <location>
        <begin position="73"/>
        <end position="93"/>
    </location>
</feature>
<feature type="transmembrane region" description="Helical" evidence="1">
    <location>
        <begin position="97"/>
        <end position="117"/>
    </location>
</feature>
<feature type="transmembrane region" description="Helical" evidence="1">
    <location>
        <begin position="134"/>
        <end position="154"/>
    </location>
</feature>
<feature type="transmembrane region" description="Helical" evidence="1">
    <location>
        <begin position="168"/>
        <end position="188"/>
    </location>
</feature>
<feature type="transmembrane region" description="Helical" evidence="1">
    <location>
        <begin position="200"/>
        <end position="220"/>
    </location>
</feature>
<feature type="transmembrane region" description="Helical" evidence="1">
    <location>
        <begin position="237"/>
        <end position="257"/>
    </location>
</feature>
<feature type="transmembrane region" description="Helical" evidence="1">
    <location>
        <begin position="264"/>
        <end position="284"/>
    </location>
</feature>
<feature type="transmembrane region" description="Helical" evidence="1">
    <location>
        <begin position="289"/>
        <end position="309"/>
    </location>
</feature>
<feature type="transmembrane region" description="Helical" evidence="1">
    <location>
        <begin position="338"/>
        <end position="358"/>
    </location>
</feature>